<reference key="1">
    <citation type="journal article" date="2006" name="Nature">
        <title>Global trends of whole-genome duplications revealed by the ciliate Paramecium tetraurelia.</title>
        <authorList>
            <person name="Aury J.-M."/>
            <person name="Jaillon O."/>
            <person name="Duret L."/>
            <person name="Noel B."/>
            <person name="Jubin C."/>
            <person name="Porcel B.M."/>
            <person name="Segurens B."/>
            <person name="Daubin V."/>
            <person name="Anthouard V."/>
            <person name="Aiach N."/>
            <person name="Arnaiz O."/>
            <person name="Billaut A."/>
            <person name="Beisson J."/>
            <person name="Blanc I."/>
            <person name="Bouhouche K."/>
            <person name="Camara F."/>
            <person name="Duharcourt S."/>
            <person name="Guigo R."/>
            <person name="Gogendeau D."/>
            <person name="Katinka M."/>
            <person name="Keller A.-M."/>
            <person name="Kissmehl R."/>
            <person name="Klotz C."/>
            <person name="Koll F."/>
            <person name="Le Mouel A."/>
            <person name="Lepere G."/>
            <person name="Malinsky S."/>
            <person name="Nowacki M."/>
            <person name="Nowak J.K."/>
            <person name="Plattner H."/>
            <person name="Poulain J."/>
            <person name="Ruiz F."/>
            <person name="Serrano V."/>
            <person name="Zagulski M."/>
            <person name="Dessen P."/>
            <person name="Betermier M."/>
            <person name="Weissenbach J."/>
            <person name="Scarpelli C."/>
            <person name="Schaechter V."/>
            <person name="Sperling L."/>
            <person name="Meyer E."/>
            <person name="Cohen J."/>
            <person name="Wincker P."/>
        </authorList>
    </citation>
    <scope>NUCLEOTIDE SEQUENCE [LARGE SCALE GENOMIC DNA]</scope>
    <source>
        <strain>Stock d4-2</strain>
    </source>
</reference>
<proteinExistence type="inferred from homology"/>
<evidence type="ECO:0000250" key="1"/>
<evidence type="ECO:0000255" key="2">
    <source>
        <dbReference type="PROSITE-ProRule" id="PRU01082"/>
    </source>
</evidence>
<evidence type="ECO:0000305" key="3"/>
<name>PP2C3_PARTE</name>
<comment type="function">
    <text evidence="1">Enzyme with a broad specificity.</text>
</comment>
<comment type="catalytic activity">
    <reaction>
        <text>O-phospho-L-seryl-[protein] + H2O = L-seryl-[protein] + phosphate</text>
        <dbReference type="Rhea" id="RHEA:20629"/>
        <dbReference type="Rhea" id="RHEA-COMP:9863"/>
        <dbReference type="Rhea" id="RHEA-COMP:11604"/>
        <dbReference type="ChEBI" id="CHEBI:15377"/>
        <dbReference type="ChEBI" id="CHEBI:29999"/>
        <dbReference type="ChEBI" id="CHEBI:43474"/>
        <dbReference type="ChEBI" id="CHEBI:83421"/>
        <dbReference type="EC" id="3.1.3.16"/>
    </reaction>
</comment>
<comment type="catalytic activity">
    <reaction>
        <text>O-phospho-L-threonyl-[protein] + H2O = L-threonyl-[protein] + phosphate</text>
        <dbReference type="Rhea" id="RHEA:47004"/>
        <dbReference type="Rhea" id="RHEA-COMP:11060"/>
        <dbReference type="Rhea" id="RHEA-COMP:11605"/>
        <dbReference type="ChEBI" id="CHEBI:15377"/>
        <dbReference type="ChEBI" id="CHEBI:30013"/>
        <dbReference type="ChEBI" id="CHEBI:43474"/>
        <dbReference type="ChEBI" id="CHEBI:61977"/>
        <dbReference type="EC" id="3.1.3.16"/>
    </reaction>
</comment>
<comment type="cofactor">
    <cofactor evidence="1">
        <name>Mg(2+)</name>
        <dbReference type="ChEBI" id="CHEBI:18420"/>
    </cofactor>
    <cofactor evidence="1">
        <name>Mn(2+)</name>
        <dbReference type="ChEBI" id="CHEBI:29035"/>
    </cofactor>
    <text evidence="1">Binds 2 magnesium or manganese ions per subunit.</text>
</comment>
<comment type="subcellular location">
    <subcellularLocation>
        <location evidence="1">Membrane</location>
        <topology evidence="1">Peripheral membrane protein</topology>
    </subcellularLocation>
</comment>
<comment type="similarity">
    <text evidence="3">Belongs to the PP2C family.</text>
</comment>
<keyword id="KW-0378">Hydrolase</keyword>
<keyword id="KW-0460">Magnesium</keyword>
<keyword id="KW-0464">Manganese</keyword>
<keyword id="KW-0472">Membrane</keyword>
<keyword id="KW-0479">Metal-binding</keyword>
<keyword id="KW-0904">Protein phosphatase</keyword>
<keyword id="KW-1185">Reference proteome</keyword>
<sequence length="300" mass="33462">MGPYLSQPKREKVTTSGEGKSVIFAASEMQGWRNTMEDAHIHRPDIVQDVSVFGVFDGHGGREVAQFVEKHFIDELLKNKNFKEQKFEDALKETFLKMDELLMTPEGAKELNNYKATDTDESYAGCTANVALIHKNTLYVANAGDSRSVLCRNNTNFDMSVDHKPDNNEEKSRIERAGGFVSDGRVNGNLNLSRALGDLEYKSDSKLRPNEQLIIAFPDVKKTELTPQDKFILMGCDGVFETLNHQELLKHVNTTLGNSPVTENLLSKAAEDLLDQLLAPDTSQGTGCDNMTTILVYLKK</sequence>
<dbReference type="EC" id="3.1.3.16"/>
<dbReference type="EMBL" id="CT868009">
    <property type="protein sequence ID" value="CAK60827.1"/>
    <property type="molecule type" value="Genomic_DNA"/>
</dbReference>
<dbReference type="RefSeq" id="XP_001428225.1">
    <property type="nucleotide sequence ID" value="XM_001428188.2"/>
</dbReference>
<dbReference type="SMR" id="A0BQL0"/>
<dbReference type="FunCoup" id="A0BQL0">
    <property type="interactions" value="1470"/>
</dbReference>
<dbReference type="STRING" id="5888.A0BQL0"/>
<dbReference type="EnsemblProtists" id="CAK60827">
    <property type="protein sequence ID" value="CAK60827"/>
    <property type="gene ID" value="GSPATT00031056001"/>
</dbReference>
<dbReference type="GeneID" id="5014009"/>
<dbReference type="KEGG" id="ptm:GSPATT00031056001"/>
<dbReference type="eggNOG" id="KOG0698">
    <property type="taxonomic scope" value="Eukaryota"/>
</dbReference>
<dbReference type="HOGENOM" id="CLU_013173_4_1_1"/>
<dbReference type="InParanoid" id="A0BQL0"/>
<dbReference type="OMA" id="FYCANIG"/>
<dbReference type="OrthoDB" id="10264738at2759"/>
<dbReference type="Proteomes" id="UP000000600">
    <property type="component" value="Partially assembled WGS sequence"/>
</dbReference>
<dbReference type="GO" id="GO:0016020">
    <property type="term" value="C:membrane"/>
    <property type="evidence" value="ECO:0007669"/>
    <property type="project" value="UniProtKB-SubCell"/>
</dbReference>
<dbReference type="GO" id="GO:0046872">
    <property type="term" value="F:metal ion binding"/>
    <property type="evidence" value="ECO:0007669"/>
    <property type="project" value="UniProtKB-KW"/>
</dbReference>
<dbReference type="GO" id="GO:0004722">
    <property type="term" value="F:protein serine/threonine phosphatase activity"/>
    <property type="evidence" value="ECO:0007669"/>
    <property type="project" value="UniProtKB-EC"/>
</dbReference>
<dbReference type="GO" id="GO:0007165">
    <property type="term" value="P:signal transduction"/>
    <property type="evidence" value="ECO:0000318"/>
    <property type="project" value="GO_Central"/>
</dbReference>
<dbReference type="CDD" id="cd00143">
    <property type="entry name" value="PP2Cc"/>
    <property type="match status" value="1"/>
</dbReference>
<dbReference type="FunFam" id="3.60.40.10:FF:000064">
    <property type="entry name" value="Protein phosphatase 2C 1"/>
    <property type="match status" value="1"/>
</dbReference>
<dbReference type="Gene3D" id="3.60.40.10">
    <property type="entry name" value="PPM-type phosphatase domain"/>
    <property type="match status" value="1"/>
</dbReference>
<dbReference type="InterPro" id="IPR015655">
    <property type="entry name" value="PP2C"/>
</dbReference>
<dbReference type="InterPro" id="IPR000222">
    <property type="entry name" value="PP2C_BS"/>
</dbReference>
<dbReference type="InterPro" id="IPR036457">
    <property type="entry name" value="PPM-type-like_dom_sf"/>
</dbReference>
<dbReference type="InterPro" id="IPR001932">
    <property type="entry name" value="PPM-type_phosphatase-like_dom"/>
</dbReference>
<dbReference type="PANTHER" id="PTHR13832:SF803">
    <property type="entry name" value="PROTEIN PHOSPHATASE 1G"/>
    <property type="match status" value="1"/>
</dbReference>
<dbReference type="PANTHER" id="PTHR13832">
    <property type="entry name" value="PROTEIN PHOSPHATASE 2C"/>
    <property type="match status" value="1"/>
</dbReference>
<dbReference type="Pfam" id="PF00481">
    <property type="entry name" value="PP2C"/>
    <property type="match status" value="1"/>
</dbReference>
<dbReference type="SMART" id="SM00332">
    <property type="entry name" value="PP2Cc"/>
    <property type="match status" value="1"/>
</dbReference>
<dbReference type="SUPFAM" id="SSF81606">
    <property type="entry name" value="PP2C-like"/>
    <property type="match status" value="1"/>
</dbReference>
<dbReference type="PROSITE" id="PS01032">
    <property type="entry name" value="PPM_1"/>
    <property type="match status" value="1"/>
</dbReference>
<dbReference type="PROSITE" id="PS51746">
    <property type="entry name" value="PPM_2"/>
    <property type="match status" value="1"/>
</dbReference>
<organism>
    <name type="scientific">Paramecium tetraurelia</name>
    <dbReference type="NCBI Taxonomy" id="5888"/>
    <lineage>
        <taxon>Eukaryota</taxon>
        <taxon>Sar</taxon>
        <taxon>Alveolata</taxon>
        <taxon>Ciliophora</taxon>
        <taxon>Intramacronucleata</taxon>
        <taxon>Oligohymenophorea</taxon>
        <taxon>Peniculida</taxon>
        <taxon>Parameciidae</taxon>
        <taxon>Paramecium</taxon>
    </lineage>
</organism>
<protein>
    <recommendedName>
        <fullName>Probable protein phosphatase 2C 3</fullName>
        <shortName>PP2C 3</shortName>
        <ecNumber>3.1.3.16</ecNumber>
    </recommendedName>
</protein>
<feature type="chain" id="PRO_0000307830" description="Probable protein phosphatase 2C 3">
    <location>
        <begin position="1"/>
        <end position="300"/>
    </location>
</feature>
<feature type="domain" description="PPM-type phosphatase" evidence="2">
    <location>
        <begin position="23"/>
        <end position="298"/>
    </location>
</feature>
<feature type="binding site" evidence="1">
    <location>
        <position position="57"/>
    </location>
    <ligand>
        <name>Mn(2+)</name>
        <dbReference type="ChEBI" id="CHEBI:29035"/>
        <label>1</label>
    </ligand>
</feature>
<feature type="binding site" evidence="1">
    <location>
        <position position="57"/>
    </location>
    <ligand>
        <name>Mn(2+)</name>
        <dbReference type="ChEBI" id="CHEBI:29035"/>
        <label>2</label>
    </ligand>
</feature>
<feature type="binding site" evidence="1">
    <location>
        <position position="58"/>
    </location>
    <ligand>
        <name>Mn(2+)</name>
        <dbReference type="ChEBI" id="CHEBI:29035"/>
        <label>1</label>
    </ligand>
</feature>
<feature type="binding site" evidence="1">
    <location>
        <position position="237"/>
    </location>
    <ligand>
        <name>Mn(2+)</name>
        <dbReference type="ChEBI" id="CHEBI:29035"/>
        <label>2</label>
    </ligand>
</feature>
<feature type="binding site" evidence="1">
    <location>
        <position position="289"/>
    </location>
    <ligand>
        <name>Mn(2+)</name>
        <dbReference type="ChEBI" id="CHEBI:29035"/>
        <label>2</label>
    </ligand>
</feature>
<gene>
    <name type="ORF">GSPATT00031056001</name>
</gene>
<accession>A0BQL0</accession>